<feature type="chain" id="PRO_1000005228" description="Small ribosomal subunit protein bS6">
    <location>
        <begin position="1"/>
        <end position="124"/>
    </location>
</feature>
<feature type="region of interest" description="Disordered" evidence="2">
    <location>
        <begin position="96"/>
        <end position="124"/>
    </location>
</feature>
<feature type="compositionally biased region" description="Low complexity" evidence="2">
    <location>
        <begin position="114"/>
        <end position="124"/>
    </location>
</feature>
<comment type="function">
    <text evidence="1">Binds together with bS18 to 16S ribosomal RNA.</text>
</comment>
<comment type="similarity">
    <text evidence="1">Belongs to the bacterial ribosomal protein bS6 family.</text>
</comment>
<organism>
    <name type="scientific">Burkholderia ambifaria (strain ATCC BAA-244 / DSM 16087 / CCUG 44356 / LMG 19182 / AMMD)</name>
    <name type="common">Burkholderia cepacia (strain AMMD)</name>
    <dbReference type="NCBI Taxonomy" id="339670"/>
    <lineage>
        <taxon>Bacteria</taxon>
        <taxon>Pseudomonadati</taxon>
        <taxon>Pseudomonadota</taxon>
        <taxon>Betaproteobacteria</taxon>
        <taxon>Burkholderiales</taxon>
        <taxon>Burkholderiaceae</taxon>
        <taxon>Burkholderia</taxon>
        <taxon>Burkholderia cepacia complex</taxon>
    </lineage>
</organism>
<sequence>MRHYEIVFIVHPDQSEQVPAMIERYKTTITTHGGQIHRVEDWGRRQLAYMIEKLAKAHYVCMNIECDQTTLDELEHAFKFNDAVLRHLIVKMKKAETGPSPMMKEVQREEAKKAAAAQPTEAQA</sequence>
<dbReference type="EMBL" id="CP000440">
    <property type="protein sequence ID" value="ABI87367.1"/>
    <property type="molecule type" value="Genomic_DNA"/>
</dbReference>
<dbReference type="RefSeq" id="WP_006755436.1">
    <property type="nucleotide sequence ID" value="NZ_CP009798.1"/>
</dbReference>
<dbReference type="SMR" id="Q0BEQ6"/>
<dbReference type="GeneID" id="93085983"/>
<dbReference type="KEGG" id="bam:Bamb_1811"/>
<dbReference type="PATRIC" id="fig|339670.21.peg.3148"/>
<dbReference type="eggNOG" id="COG0360">
    <property type="taxonomic scope" value="Bacteria"/>
</dbReference>
<dbReference type="Proteomes" id="UP000000662">
    <property type="component" value="Chromosome 1"/>
</dbReference>
<dbReference type="GO" id="GO:0022627">
    <property type="term" value="C:cytosolic small ribosomal subunit"/>
    <property type="evidence" value="ECO:0007669"/>
    <property type="project" value="TreeGrafter"/>
</dbReference>
<dbReference type="GO" id="GO:0070181">
    <property type="term" value="F:small ribosomal subunit rRNA binding"/>
    <property type="evidence" value="ECO:0007669"/>
    <property type="project" value="TreeGrafter"/>
</dbReference>
<dbReference type="GO" id="GO:0003735">
    <property type="term" value="F:structural constituent of ribosome"/>
    <property type="evidence" value="ECO:0007669"/>
    <property type="project" value="InterPro"/>
</dbReference>
<dbReference type="GO" id="GO:0006412">
    <property type="term" value="P:translation"/>
    <property type="evidence" value="ECO:0007669"/>
    <property type="project" value="UniProtKB-UniRule"/>
</dbReference>
<dbReference type="CDD" id="cd00473">
    <property type="entry name" value="bS6"/>
    <property type="match status" value="1"/>
</dbReference>
<dbReference type="Gene3D" id="3.30.70.60">
    <property type="match status" value="1"/>
</dbReference>
<dbReference type="HAMAP" id="MF_00360">
    <property type="entry name" value="Ribosomal_bS6"/>
    <property type="match status" value="1"/>
</dbReference>
<dbReference type="InterPro" id="IPR000529">
    <property type="entry name" value="Ribosomal_bS6"/>
</dbReference>
<dbReference type="InterPro" id="IPR035980">
    <property type="entry name" value="Ribosomal_bS6_sf"/>
</dbReference>
<dbReference type="InterPro" id="IPR020814">
    <property type="entry name" value="Ribosomal_S6_plastid/chlpt"/>
</dbReference>
<dbReference type="InterPro" id="IPR014717">
    <property type="entry name" value="Transl_elong_EF1B/ribsomal_bS6"/>
</dbReference>
<dbReference type="NCBIfam" id="TIGR00166">
    <property type="entry name" value="S6"/>
    <property type="match status" value="1"/>
</dbReference>
<dbReference type="PANTHER" id="PTHR21011">
    <property type="entry name" value="MITOCHONDRIAL 28S RIBOSOMAL PROTEIN S6"/>
    <property type="match status" value="1"/>
</dbReference>
<dbReference type="PANTHER" id="PTHR21011:SF1">
    <property type="entry name" value="SMALL RIBOSOMAL SUBUNIT PROTEIN BS6M"/>
    <property type="match status" value="1"/>
</dbReference>
<dbReference type="Pfam" id="PF01250">
    <property type="entry name" value="Ribosomal_S6"/>
    <property type="match status" value="1"/>
</dbReference>
<dbReference type="SUPFAM" id="SSF54995">
    <property type="entry name" value="Ribosomal protein S6"/>
    <property type="match status" value="1"/>
</dbReference>
<accession>Q0BEQ6</accession>
<proteinExistence type="inferred from homology"/>
<evidence type="ECO:0000255" key="1">
    <source>
        <dbReference type="HAMAP-Rule" id="MF_00360"/>
    </source>
</evidence>
<evidence type="ECO:0000256" key="2">
    <source>
        <dbReference type="SAM" id="MobiDB-lite"/>
    </source>
</evidence>
<evidence type="ECO:0000305" key="3"/>
<reference key="1">
    <citation type="submission" date="2006-08" db="EMBL/GenBank/DDBJ databases">
        <title>Complete sequence of chromosome 1 of Burkholderia cepacia AMMD.</title>
        <authorList>
            <person name="Copeland A."/>
            <person name="Lucas S."/>
            <person name="Lapidus A."/>
            <person name="Barry K."/>
            <person name="Detter J.C."/>
            <person name="Glavina del Rio T."/>
            <person name="Hammon N."/>
            <person name="Israni S."/>
            <person name="Pitluck S."/>
            <person name="Bruce D."/>
            <person name="Chain P."/>
            <person name="Malfatti S."/>
            <person name="Shin M."/>
            <person name="Vergez L."/>
            <person name="Schmutz J."/>
            <person name="Larimer F."/>
            <person name="Land M."/>
            <person name="Hauser L."/>
            <person name="Kyrpides N."/>
            <person name="Kim E."/>
            <person name="Parke J."/>
            <person name="Coenye T."/>
            <person name="Konstantinidis K."/>
            <person name="Ramette A."/>
            <person name="Tiedje J."/>
            <person name="Richardson P."/>
        </authorList>
    </citation>
    <scope>NUCLEOTIDE SEQUENCE [LARGE SCALE GENOMIC DNA]</scope>
    <source>
        <strain>ATCC BAA-244 / DSM 16087 / CCUG 44356 / LMG 19182 / AMMD</strain>
    </source>
</reference>
<gene>
    <name evidence="1" type="primary">rpsF</name>
    <name type="ordered locus">Bamb_1811</name>
</gene>
<keyword id="KW-0687">Ribonucleoprotein</keyword>
<keyword id="KW-0689">Ribosomal protein</keyword>
<keyword id="KW-0694">RNA-binding</keyword>
<keyword id="KW-0699">rRNA-binding</keyword>
<name>RS6_BURCM</name>
<protein>
    <recommendedName>
        <fullName evidence="1">Small ribosomal subunit protein bS6</fullName>
    </recommendedName>
    <alternativeName>
        <fullName evidence="3">30S ribosomal protein S6</fullName>
    </alternativeName>
</protein>